<evidence type="ECO:0000255" key="1">
    <source>
        <dbReference type="HAMAP-Rule" id="MF_00375"/>
    </source>
</evidence>
<sequence length="429" mass="47056">MKFTESERLQQLSNEYILGGVNSPSRSYKAVGGGAPVVMKEGHGAYLYDVDGNKYIDYLQAYGPIITGHAHPHITEAIQDQAAKGVLYGTPTELEINFSKKLREAVPSLEKIRFVNSGTEAVMTTIRVARAYTKRNKIIKFAGSYHGHSDLVLVAAGSGPSQLGSPDSAGVPQSVAQEVITVPFNDIESYREAIDYWKDDIAAVLVEPIVGNFGMVMPQPGFLEEVNKISHDNGTLVIYDEVITAFRFHYGAAQDLLGVKPDLTAFGKIVGGGLPIGGYGGRQDIMEHVAPLGPAYQAGTMAGNPLSMRAGIALLEVLEQEGVYDKLDQLGRRLEEGLQKLIDKHHITATINRIYGSLTLYFTNEKVTHYEQVENSDGDAFAQFFKLMLNQGINLAPSKFEAWFLTTEHTEEDIDRTLEAADYAFSKMK</sequence>
<organism>
    <name type="scientific">Staphylococcus epidermidis (strain ATCC 35984 / DSM 28319 / BCRC 17069 / CCUG 31568 / BM 3577 / RP62A)</name>
    <dbReference type="NCBI Taxonomy" id="176279"/>
    <lineage>
        <taxon>Bacteria</taxon>
        <taxon>Bacillati</taxon>
        <taxon>Bacillota</taxon>
        <taxon>Bacilli</taxon>
        <taxon>Bacillales</taxon>
        <taxon>Staphylococcaceae</taxon>
        <taxon>Staphylococcus</taxon>
    </lineage>
</organism>
<name>GSA2_STAEQ</name>
<feature type="chain" id="PRO_0000120457" description="Glutamate-1-semialdehyde 2,1-aminomutase 2">
    <location>
        <begin position="1"/>
        <end position="429"/>
    </location>
</feature>
<feature type="modified residue" description="N6-(pyridoxal phosphate)lysine" evidence="1">
    <location>
        <position position="268"/>
    </location>
</feature>
<keyword id="KW-0963">Cytoplasm</keyword>
<keyword id="KW-0413">Isomerase</keyword>
<keyword id="KW-0627">Porphyrin biosynthesis</keyword>
<keyword id="KW-0663">Pyridoxal phosphate</keyword>
<keyword id="KW-1185">Reference proteome</keyword>
<accession>Q5HN71</accession>
<proteinExistence type="inferred from homology"/>
<gene>
    <name evidence="1" type="primary">hemL2</name>
    <name type="synonym">gsaB</name>
    <name type="ordered locus">SERP1401</name>
</gene>
<comment type="catalytic activity">
    <reaction evidence="1">
        <text>(S)-4-amino-5-oxopentanoate = 5-aminolevulinate</text>
        <dbReference type="Rhea" id="RHEA:14265"/>
        <dbReference type="ChEBI" id="CHEBI:57501"/>
        <dbReference type="ChEBI" id="CHEBI:356416"/>
        <dbReference type="EC" id="5.4.3.8"/>
    </reaction>
</comment>
<comment type="cofactor">
    <cofactor evidence="1">
        <name>pyridoxal 5'-phosphate</name>
        <dbReference type="ChEBI" id="CHEBI:597326"/>
    </cofactor>
</comment>
<comment type="pathway">
    <text evidence="1">Porphyrin-containing compound metabolism; protoporphyrin-IX biosynthesis; 5-aminolevulinate from L-glutamyl-tRNA(Glu): step 2/2.</text>
</comment>
<comment type="subunit">
    <text evidence="1">Homodimer.</text>
</comment>
<comment type="subcellular location">
    <subcellularLocation>
        <location evidence="1">Cytoplasm</location>
    </subcellularLocation>
</comment>
<comment type="similarity">
    <text evidence="1">Belongs to the class-III pyridoxal-phosphate-dependent aminotransferase family. HemL subfamily.</text>
</comment>
<reference key="1">
    <citation type="journal article" date="2005" name="J. Bacteriol.">
        <title>Insights on evolution of virulence and resistance from the complete genome analysis of an early methicillin-resistant Staphylococcus aureus strain and a biofilm-producing methicillin-resistant Staphylococcus epidermidis strain.</title>
        <authorList>
            <person name="Gill S.R."/>
            <person name="Fouts D.E."/>
            <person name="Archer G.L."/>
            <person name="Mongodin E.F."/>
            <person name="DeBoy R.T."/>
            <person name="Ravel J."/>
            <person name="Paulsen I.T."/>
            <person name="Kolonay J.F."/>
            <person name="Brinkac L.M."/>
            <person name="Beanan M.J."/>
            <person name="Dodson R.J."/>
            <person name="Daugherty S.C."/>
            <person name="Madupu R."/>
            <person name="Angiuoli S.V."/>
            <person name="Durkin A.S."/>
            <person name="Haft D.H."/>
            <person name="Vamathevan J.J."/>
            <person name="Khouri H."/>
            <person name="Utterback T.R."/>
            <person name="Lee C."/>
            <person name="Dimitrov G."/>
            <person name="Jiang L."/>
            <person name="Qin H."/>
            <person name="Weidman J."/>
            <person name="Tran K."/>
            <person name="Kang K.H."/>
            <person name="Hance I.R."/>
            <person name="Nelson K.E."/>
            <person name="Fraser C.M."/>
        </authorList>
    </citation>
    <scope>NUCLEOTIDE SEQUENCE [LARGE SCALE GENOMIC DNA]</scope>
    <source>
        <strain>ATCC 35984 / DSM 28319 / BCRC 17069 / CCUG 31568 / BM 3577 / RP62A</strain>
    </source>
</reference>
<protein>
    <recommendedName>
        <fullName evidence="1">Glutamate-1-semialdehyde 2,1-aminomutase 2</fullName>
        <shortName evidence="1">GSA 2</shortName>
        <ecNumber evidence="1">5.4.3.8</ecNumber>
    </recommendedName>
    <alternativeName>
        <fullName evidence="1">Glutamate-1-semialdehyde aminotransferase 2</fullName>
        <shortName evidence="1">GSA-AT 2</shortName>
    </alternativeName>
</protein>
<dbReference type="EC" id="5.4.3.8" evidence="1"/>
<dbReference type="EMBL" id="CP000029">
    <property type="protein sequence ID" value="AAW54742.1"/>
    <property type="molecule type" value="Genomic_DNA"/>
</dbReference>
<dbReference type="RefSeq" id="WP_001830429.1">
    <property type="nucleotide sequence ID" value="NC_002976.3"/>
</dbReference>
<dbReference type="SMR" id="Q5HN71"/>
<dbReference type="STRING" id="176279.SERP1401"/>
<dbReference type="KEGG" id="ser:SERP1401"/>
<dbReference type="eggNOG" id="COG0001">
    <property type="taxonomic scope" value="Bacteria"/>
</dbReference>
<dbReference type="HOGENOM" id="CLU_016922_1_5_9"/>
<dbReference type="UniPathway" id="UPA00251">
    <property type="reaction ID" value="UER00317"/>
</dbReference>
<dbReference type="Proteomes" id="UP000000531">
    <property type="component" value="Chromosome"/>
</dbReference>
<dbReference type="GO" id="GO:0005737">
    <property type="term" value="C:cytoplasm"/>
    <property type="evidence" value="ECO:0007669"/>
    <property type="project" value="UniProtKB-SubCell"/>
</dbReference>
<dbReference type="GO" id="GO:0042286">
    <property type="term" value="F:glutamate-1-semialdehyde 2,1-aminomutase activity"/>
    <property type="evidence" value="ECO:0007669"/>
    <property type="project" value="UniProtKB-UniRule"/>
</dbReference>
<dbReference type="GO" id="GO:0030170">
    <property type="term" value="F:pyridoxal phosphate binding"/>
    <property type="evidence" value="ECO:0007669"/>
    <property type="project" value="InterPro"/>
</dbReference>
<dbReference type="GO" id="GO:0008483">
    <property type="term" value="F:transaminase activity"/>
    <property type="evidence" value="ECO:0007669"/>
    <property type="project" value="InterPro"/>
</dbReference>
<dbReference type="GO" id="GO:0006782">
    <property type="term" value="P:protoporphyrinogen IX biosynthetic process"/>
    <property type="evidence" value="ECO:0007669"/>
    <property type="project" value="UniProtKB-UniRule"/>
</dbReference>
<dbReference type="CDD" id="cd00610">
    <property type="entry name" value="OAT_like"/>
    <property type="match status" value="1"/>
</dbReference>
<dbReference type="FunFam" id="3.40.640.10:FF:000021">
    <property type="entry name" value="Glutamate-1-semialdehyde 2,1-aminomutase"/>
    <property type="match status" value="1"/>
</dbReference>
<dbReference type="Gene3D" id="3.90.1150.10">
    <property type="entry name" value="Aspartate Aminotransferase, domain 1"/>
    <property type="match status" value="1"/>
</dbReference>
<dbReference type="Gene3D" id="3.40.640.10">
    <property type="entry name" value="Type I PLP-dependent aspartate aminotransferase-like (Major domain)"/>
    <property type="match status" value="1"/>
</dbReference>
<dbReference type="HAMAP" id="MF_00375">
    <property type="entry name" value="HemL_aminotrans_3"/>
    <property type="match status" value="1"/>
</dbReference>
<dbReference type="InterPro" id="IPR004639">
    <property type="entry name" value="4pyrrol_synth_GluAld_NH2Trfase"/>
</dbReference>
<dbReference type="InterPro" id="IPR005814">
    <property type="entry name" value="Aminotrans_3"/>
</dbReference>
<dbReference type="InterPro" id="IPR049704">
    <property type="entry name" value="Aminotrans_3_PPA_site"/>
</dbReference>
<dbReference type="InterPro" id="IPR015424">
    <property type="entry name" value="PyrdxlP-dep_Trfase"/>
</dbReference>
<dbReference type="InterPro" id="IPR015421">
    <property type="entry name" value="PyrdxlP-dep_Trfase_major"/>
</dbReference>
<dbReference type="InterPro" id="IPR015422">
    <property type="entry name" value="PyrdxlP-dep_Trfase_small"/>
</dbReference>
<dbReference type="NCBIfam" id="TIGR00713">
    <property type="entry name" value="hemL"/>
    <property type="match status" value="1"/>
</dbReference>
<dbReference type="NCBIfam" id="NF000818">
    <property type="entry name" value="PRK00062.1"/>
    <property type="match status" value="1"/>
</dbReference>
<dbReference type="NCBIfam" id="NF009055">
    <property type="entry name" value="PRK12389.1"/>
    <property type="match status" value="1"/>
</dbReference>
<dbReference type="PANTHER" id="PTHR43713">
    <property type="entry name" value="GLUTAMATE-1-SEMIALDEHYDE 2,1-AMINOMUTASE"/>
    <property type="match status" value="1"/>
</dbReference>
<dbReference type="PANTHER" id="PTHR43713:SF1">
    <property type="entry name" value="GLUTAMATE-1-SEMIALDEHYDE 2,1-AMINOMUTASE 2"/>
    <property type="match status" value="1"/>
</dbReference>
<dbReference type="Pfam" id="PF00202">
    <property type="entry name" value="Aminotran_3"/>
    <property type="match status" value="1"/>
</dbReference>
<dbReference type="SUPFAM" id="SSF53383">
    <property type="entry name" value="PLP-dependent transferases"/>
    <property type="match status" value="1"/>
</dbReference>
<dbReference type="PROSITE" id="PS00600">
    <property type="entry name" value="AA_TRANSFER_CLASS_3"/>
    <property type="match status" value="1"/>
</dbReference>